<protein>
    <recommendedName>
        <fullName>Armadillo repeat-containing X-linked protein 5</fullName>
    </recommendedName>
</protein>
<comment type="similarity">
    <text evidence="3">Belongs to the eutherian X-chromosome-specific Armcx family.</text>
</comment>
<feature type="chain" id="PRO_0000191372" description="Armadillo repeat-containing X-linked protein 5">
    <location>
        <begin position="1"/>
        <end position="558"/>
    </location>
</feature>
<feature type="repeat" description="ARM 1" evidence="1">
    <location>
        <begin position="300"/>
        <end position="339"/>
    </location>
</feature>
<feature type="repeat" description="ARM 2" evidence="1">
    <location>
        <begin position="422"/>
        <end position="461"/>
    </location>
</feature>
<feature type="repeat" description="ARM 3" evidence="1">
    <location>
        <begin position="463"/>
        <end position="503"/>
    </location>
</feature>
<feature type="repeat" description="ARM 4" evidence="1">
    <location>
        <begin position="520"/>
        <end position="558"/>
    </location>
</feature>
<feature type="region of interest" description="Disordered" evidence="2">
    <location>
        <begin position="1"/>
        <end position="34"/>
    </location>
</feature>
<feature type="region of interest" description="Disordered" evidence="2">
    <location>
        <begin position="139"/>
        <end position="163"/>
    </location>
</feature>
<feature type="compositionally biased region" description="Basic and acidic residues" evidence="2">
    <location>
        <begin position="1"/>
        <end position="14"/>
    </location>
</feature>
<feature type="compositionally biased region" description="Basic and acidic residues" evidence="2">
    <location>
        <begin position="139"/>
        <end position="156"/>
    </location>
</feature>
<dbReference type="EMBL" id="CR857948">
    <property type="protein sequence ID" value="CAH90195.1"/>
    <property type="molecule type" value="mRNA"/>
</dbReference>
<dbReference type="RefSeq" id="NP_001125073.1">
    <property type="nucleotide sequence ID" value="NM_001131601.1"/>
</dbReference>
<dbReference type="SMR" id="Q5RDG2"/>
<dbReference type="FunCoup" id="Q5RDG2">
    <property type="interactions" value="47"/>
</dbReference>
<dbReference type="STRING" id="9601.ENSPPYP00000023023"/>
<dbReference type="GeneID" id="100171954"/>
<dbReference type="KEGG" id="pon:100171954"/>
<dbReference type="CTD" id="64860"/>
<dbReference type="eggNOG" id="ENOG502RK9I">
    <property type="taxonomic scope" value="Eukaryota"/>
</dbReference>
<dbReference type="InParanoid" id="Q5RDG2"/>
<dbReference type="OrthoDB" id="9530227at2759"/>
<dbReference type="Proteomes" id="UP000001595">
    <property type="component" value="Unplaced"/>
</dbReference>
<dbReference type="Gene3D" id="1.25.10.10">
    <property type="entry name" value="Leucine-rich Repeat Variant"/>
    <property type="match status" value="1"/>
</dbReference>
<dbReference type="InterPro" id="IPR011989">
    <property type="entry name" value="ARM-like"/>
</dbReference>
<dbReference type="InterPro" id="IPR006911">
    <property type="entry name" value="ARM-rpt_dom"/>
</dbReference>
<dbReference type="InterPro" id="IPR016024">
    <property type="entry name" value="ARM-type_fold"/>
</dbReference>
<dbReference type="PANTHER" id="PTHR47081">
    <property type="match status" value="1"/>
</dbReference>
<dbReference type="PANTHER" id="PTHR47081:SF2">
    <property type="entry name" value="ARMADILLO REPEAT-CONTAINING X-LINKED PROTEIN 5"/>
    <property type="match status" value="1"/>
</dbReference>
<dbReference type="Pfam" id="PF04826">
    <property type="entry name" value="Arm_2"/>
    <property type="match status" value="1"/>
</dbReference>
<dbReference type="SUPFAM" id="SSF48371">
    <property type="entry name" value="ARM repeat"/>
    <property type="match status" value="1"/>
</dbReference>
<accession>Q5RDG2</accession>
<proteinExistence type="evidence at transcript level"/>
<gene>
    <name type="primary">ARMCX5</name>
</gene>
<keyword id="KW-1185">Reference proteome</keyword>
<keyword id="KW-0677">Repeat</keyword>
<reference key="1">
    <citation type="submission" date="2004-11" db="EMBL/GenBank/DDBJ databases">
        <authorList>
            <consortium name="The German cDNA consortium"/>
        </authorList>
    </citation>
    <scope>NUCLEOTIDE SEQUENCE [LARGE SCALE MRNA]</scope>
    <source>
        <tissue>Kidney</tissue>
    </source>
</reference>
<name>ARMX5_PONAB</name>
<sequence>MVDSGTEARARGKAEAGLQDGISGPAAARVNGKTQAKAVAEAELKTESVTQAKAGDGAMTRTHTVTYREAMAVTREVIKVEDTTKTRVMVQTKTKPLAERSIVPQTKSRAMPISRVSTVTKSEVKVVAVIEANIKSYAKSHDKANTGSRPDRREEASIGMKSSDEDEENICSWFWTGEEPSVGSWFWPEEETSLQVYKPLPKIQEKPKPTHKPTLTIKQTVIAWSRARYIVLVPVEGGEQSFPPEGNWTLVETLIETPLGIRPLTKIPPYHGPYYQTLAEIKKQIRQREKYGPNPKACHCKSRGFSLEPKEFDKLVALLKLTKDPFIHEIATMIMGISPAYPFTQDIIHDVGITVMIENLVSNPNVKEHPRALSMVDDSSESSEGPKSGESYIHQVCKGILSCPMNSPVQLAGLKLLGHLSVKFEDHYVITSYIPDFLTLLNKGSVKTKFYVLKVFSCLSKNHANTRELISAKVLSSLVAPFNKNESKANILNIIEIFENINFQVKTKAKLFTKEKFTKSELISIFQEAKQFGQKLQDLAEHSDPEVRDKVIRLILKL</sequence>
<evidence type="ECO:0000255" key="1"/>
<evidence type="ECO:0000256" key="2">
    <source>
        <dbReference type="SAM" id="MobiDB-lite"/>
    </source>
</evidence>
<evidence type="ECO:0000305" key="3"/>
<organism>
    <name type="scientific">Pongo abelii</name>
    <name type="common">Sumatran orangutan</name>
    <name type="synonym">Pongo pygmaeus abelii</name>
    <dbReference type="NCBI Taxonomy" id="9601"/>
    <lineage>
        <taxon>Eukaryota</taxon>
        <taxon>Metazoa</taxon>
        <taxon>Chordata</taxon>
        <taxon>Craniata</taxon>
        <taxon>Vertebrata</taxon>
        <taxon>Euteleostomi</taxon>
        <taxon>Mammalia</taxon>
        <taxon>Eutheria</taxon>
        <taxon>Euarchontoglires</taxon>
        <taxon>Primates</taxon>
        <taxon>Haplorrhini</taxon>
        <taxon>Catarrhini</taxon>
        <taxon>Hominidae</taxon>
        <taxon>Pongo</taxon>
    </lineage>
</organism>